<feature type="signal peptide" evidence="2">
    <location>
        <begin position="1"/>
        <end position="40"/>
    </location>
</feature>
<feature type="chain" id="PRO_0000314965" description="HHIP-like protein 2">
    <location>
        <begin position="41"/>
        <end position="717"/>
    </location>
</feature>
<feature type="region of interest" description="Disordered" evidence="3">
    <location>
        <begin position="642"/>
        <end position="717"/>
    </location>
</feature>
<feature type="compositionally biased region" description="Polar residues" evidence="3">
    <location>
        <begin position="646"/>
        <end position="662"/>
    </location>
</feature>
<feature type="compositionally biased region" description="Basic residues" evidence="3">
    <location>
        <begin position="672"/>
        <end position="687"/>
    </location>
</feature>
<feature type="glycosylation site" description="N-linked (GlcNAc...) asparagine" evidence="2">
    <location>
        <position position="647"/>
    </location>
</feature>
<feature type="disulfide bond" evidence="1">
    <location>
        <begin position="203"/>
        <end position="545"/>
    </location>
</feature>
<feature type="disulfide bond" evidence="1">
    <location>
        <begin position="207"/>
        <end position="551"/>
    </location>
</feature>
<feature type="disulfide bond" evidence="1">
    <location>
        <begin position="423"/>
        <end position="441"/>
    </location>
</feature>
<feature type="disulfide bond" evidence="1">
    <location>
        <begin position="508"/>
        <end position="607"/>
    </location>
</feature>
<feature type="splice variant" id="VSP_030459" description="In isoform 2." evidence="4">
    <location>
        <begin position="1"/>
        <end position="220"/>
    </location>
</feature>
<sequence length="717" mass="79998">MLGKHTSPHTVPGHRAPWLSPGIFCLGLPFLLGWVGLLQGHPQCLDYGPPFRPPQHLDFCSDYDSFGCCDQRKDRRIAARYWDIMSYFDLKAHELCGGYIKDILCQECSPYAAHLYDAENPQTPLRNLPGLCSDYCSAFHRSCHSAISLLTNDRGLQESHGKDGARFCHLLNLPDEDYCFPNVLRNDQLNRNLGVVAEDQQGCLQLCLVEVANGLRNPVSMVHAGDGTHRFFVAEQVGVVWVYLPDGSRLEQPFLDLKSMVLTTPWIGDERGFLGLAFHPKFRHNRKFYIYYSCLGKRKVEKIRISEMKVSLSDGNRADPKSERVILEIDEPASNHNGGQLLFGLDGYLYIFTGDGGQAGDPFGKFGNAQNKSSLLGKVLRIDVNGADVDGQRYRVPLDNPFVSEPGAHPAVYAYGVRNMWRCAVDRGDPVTHRGRGRIFCGDVGQNKFEEVDLIVKGGNYGWRAKEGFECYDKRLCRNASLDDILPIYAYGHGVGKSVTGGYVYRGCESPNLNGLYIFGDFMSGRLMALQEDRKTQKWTKRDICLGNSTCAFPGLISAYSRFIISFAEDEAGELYFLATSYPSAYAPHGSIYKFVDPSRRAPPGKCKYKPVPVKTKSKKVRFRPLAATVLDLLKEESQKAARKASNATFTSSSDRVASQKGSLKKPASSRSSKKTFRRPGTKKKSRVWSPRPQGKRKPNLDSHGVGMRQAAGRSHP</sequence>
<dbReference type="EMBL" id="AK019671">
    <property type="protein sequence ID" value="BAB31831.1"/>
    <property type="molecule type" value="mRNA"/>
</dbReference>
<dbReference type="EMBL" id="BC034362">
    <property type="protein sequence ID" value="AAH34362.1"/>
    <property type="molecule type" value="mRNA"/>
</dbReference>
<dbReference type="EMBL" id="BG175128">
    <property type="status" value="NOT_ANNOTATED_CDS"/>
    <property type="molecule type" value="mRNA"/>
</dbReference>
<dbReference type="CCDS" id="CCDS56664.1">
    <molecule id="Q9D2G9-1"/>
</dbReference>
<dbReference type="CCDS" id="CCDS78765.1">
    <molecule id="Q9D2G9-2"/>
</dbReference>
<dbReference type="RefSeq" id="NP_001294981.1">
    <molecule id="Q9D2G9-2"/>
    <property type="nucleotide sequence ID" value="NM_001308052.1"/>
</dbReference>
<dbReference type="RefSeq" id="NP_084451.2">
    <molecule id="Q9D2G9-1"/>
    <property type="nucleotide sequence ID" value="NM_030175.5"/>
</dbReference>
<dbReference type="SMR" id="Q9D2G9"/>
<dbReference type="BioGRID" id="219621">
    <property type="interactions" value="1"/>
</dbReference>
<dbReference type="FunCoup" id="Q9D2G9">
    <property type="interactions" value="1"/>
</dbReference>
<dbReference type="STRING" id="10090.ENSMUSP00000070719"/>
<dbReference type="GlyCosmos" id="Q9D2G9">
    <property type="glycosylation" value="1 site, No reported glycans"/>
</dbReference>
<dbReference type="GlyGen" id="Q9D2G9">
    <property type="glycosylation" value="1 site"/>
</dbReference>
<dbReference type="iPTMnet" id="Q9D2G9"/>
<dbReference type="PhosphoSitePlus" id="Q9D2G9"/>
<dbReference type="PaxDb" id="10090-ENSMUSP00000070719"/>
<dbReference type="Antibodypedia" id="53968">
    <property type="antibodies" value="30 antibodies from 10 providers"/>
</dbReference>
<dbReference type="DNASU" id="78772"/>
<dbReference type="Ensembl" id="ENSMUST00000065900.10">
    <molecule id="Q9D2G9-1"/>
    <property type="protein sequence ID" value="ENSMUSP00000070719.5"/>
    <property type="gene ID" value="ENSMUSG00000053461.10"/>
</dbReference>
<dbReference type="Ensembl" id="ENSMUST00000192527.2">
    <molecule id="Q9D2G9-2"/>
    <property type="protein sequence ID" value="ENSMUSP00000142121.2"/>
    <property type="gene ID" value="ENSMUSG00000053461.10"/>
</dbReference>
<dbReference type="GeneID" id="78772"/>
<dbReference type="KEGG" id="mmu:78772"/>
<dbReference type="UCSC" id="uc012bop.1">
    <molecule id="Q9D2G9-1"/>
    <property type="organism name" value="mouse"/>
</dbReference>
<dbReference type="AGR" id="MGI:1926022"/>
<dbReference type="CTD" id="79802"/>
<dbReference type="MGI" id="MGI:1926022">
    <property type="gene designation" value="Hhipl2"/>
</dbReference>
<dbReference type="VEuPathDB" id="HostDB:ENSMUSG00000053461"/>
<dbReference type="eggNOG" id="ENOG502QQKP">
    <property type="taxonomic scope" value="Eukaryota"/>
</dbReference>
<dbReference type="GeneTree" id="ENSGT00940000161139"/>
<dbReference type="HOGENOM" id="CLU_012344_2_2_1"/>
<dbReference type="InParanoid" id="Q9D2G9"/>
<dbReference type="OMA" id="CCDQSKD"/>
<dbReference type="OrthoDB" id="10266706at2759"/>
<dbReference type="PhylomeDB" id="Q9D2G9"/>
<dbReference type="TreeFam" id="TF329059"/>
<dbReference type="BioGRID-ORCS" id="78772">
    <property type="hits" value="0 hits in 79 CRISPR screens"/>
</dbReference>
<dbReference type="ChiTaRS" id="Hhipl2">
    <property type="organism name" value="mouse"/>
</dbReference>
<dbReference type="PRO" id="PR:Q9D2G9"/>
<dbReference type="Proteomes" id="UP000000589">
    <property type="component" value="Chromosome 1"/>
</dbReference>
<dbReference type="RNAct" id="Q9D2G9">
    <property type="molecule type" value="protein"/>
</dbReference>
<dbReference type="Bgee" id="ENSMUSG00000053461">
    <property type="expression patterns" value="Expressed in animal zygote and 38 other cell types or tissues"/>
</dbReference>
<dbReference type="GO" id="GO:0005576">
    <property type="term" value="C:extracellular region"/>
    <property type="evidence" value="ECO:0007669"/>
    <property type="project" value="UniProtKB-SubCell"/>
</dbReference>
<dbReference type="Gene3D" id="2.120.10.30">
    <property type="entry name" value="TolB, C-terminal domain"/>
    <property type="match status" value="1"/>
</dbReference>
<dbReference type="InterPro" id="IPR011042">
    <property type="entry name" value="6-blade_b-propeller_TolB-like"/>
</dbReference>
<dbReference type="InterPro" id="IPR018143">
    <property type="entry name" value="Folate_rcpt-like"/>
</dbReference>
<dbReference type="InterPro" id="IPR012938">
    <property type="entry name" value="Glc/Sorbosone_DH"/>
</dbReference>
<dbReference type="InterPro" id="IPR011041">
    <property type="entry name" value="Quinoprot_gluc/sorb_DH_b-prop"/>
</dbReference>
<dbReference type="PANTHER" id="PTHR19328">
    <property type="entry name" value="HEDGEHOG-INTERACTING PROTEIN"/>
    <property type="match status" value="1"/>
</dbReference>
<dbReference type="PANTHER" id="PTHR19328:SF54">
    <property type="entry name" value="HHIP-LIKE PROTEIN 2"/>
    <property type="match status" value="1"/>
</dbReference>
<dbReference type="Pfam" id="PF03024">
    <property type="entry name" value="Folate_rec"/>
    <property type="match status" value="1"/>
</dbReference>
<dbReference type="Pfam" id="PF07995">
    <property type="entry name" value="GSDH"/>
    <property type="match status" value="1"/>
</dbReference>
<dbReference type="SUPFAM" id="SSF50952">
    <property type="entry name" value="Soluble quinoprotein glucose dehydrogenase"/>
    <property type="match status" value="1"/>
</dbReference>
<gene>
    <name type="primary">Hhipl2</name>
    <name type="synonym">Hhip3</name>
    <name type="synonym">Kiaa1822l</name>
</gene>
<organism>
    <name type="scientific">Mus musculus</name>
    <name type="common">Mouse</name>
    <dbReference type="NCBI Taxonomy" id="10090"/>
    <lineage>
        <taxon>Eukaryota</taxon>
        <taxon>Metazoa</taxon>
        <taxon>Chordata</taxon>
        <taxon>Craniata</taxon>
        <taxon>Vertebrata</taxon>
        <taxon>Euteleostomi</taxon>
        <taxon>Mammalia</taxon>
        <taxon>Eutheria</taxon>
        <taxon>Euarchontoglires</taxon>
        <taxon>Glires</taxon>
        <taxon>Rodentia</taxon>
        <taxon>Myomorpha</taxon>
        <taxon>Muroidea</taxon>
        <taxon>Muridae</taxon>
        <taxon>Murinae</taxon>
        <taxon>Mus</taxon>
        <taxon>Mus</taxon>
    </lineage>
</organism>
<comment type="subcellular location">
    <subcellularLocation>
        <location evidence="5">Secreted</location>
    </subcellularLocation>
</comment>
<comment type="alternative products">
    <event type="alternative splicing"/>
    <isoform>
        <id>Q9D2G9-1</id>
        <name>1</name>
        <sequence type="displayed"/>
    </isoform>
    <isoform>
        <id>Q9D2G9-2</id>
        <name>2</name>
        <sequence type="described" ref="VSP_030459"/>
    </isoform>
</comment>
<comment type="similarity">
    <text evidence="5">Belongs to the HHIP family.</text>
</comment>
<reference key="1">
    <citation type="journal article" date="2005" name="Science">
        <title>The transcriptional landscape of the mammalian genome.</title>
        <authorList>
            <person name="Carninci P."/>
            <person name="Kasukawa T."/>
            <person name="Katayama S."/>
            <person name="Gough J."/>
            <person name="Frith M.C."/>
            <person name="Maeda N."/>
            <person name="Oyama R."/>
            <person name="Ravasi T."/>
            <person name="Lenhard B."/>
            <person name="Wells C."/>
            <person name="Kodzius R."/>
            <person name="Shimokawa K."/>
            <person name="Bajic V.B."/>
            <person name="Brenner S.E."/>
            <person name="Batalov S."/>
            <person name="Forrest A.R."/>
            <person name="Zavolan M."/>
            <person name="Davis M.J."/>
            <person name="Wilming L.G."/>
            <person name="Aidinis V."/>
            <person name="Allen J.E."/>
            <person name="Ambesi-Impiombato A."/>
            <person name="Apweiler R."/>
            <person name="Aturaliya R.N."/>
            <person name="Bailey T.L."/>
            <person name="Bansal M."/>
            <person name="Baxter L."/>
            <person name="Beisel K.W."/>
            <person name="Bersano T."/>
            <person name="Bono H."/>
            <person name="Chalk A.M."/>
            <person name="Chiu K.P."/>
            <person name="Choudhary V."/>
            <person name="Christoffels A."/>
            <person name="Clutterbuck D.R."/>
            <person name="Crowe M.L."/>
            <person name="Dalla E."/>
            <person name="Dalrymple B.P."/>
            <person name="de Bono B."/>
            <person name="Della Gatta G."/>
            <person name="di Bernardo D."/>
            <person name="Down T."/>
            <person name="Engstrom P."/>
            <person name="Fagiolini M."/>
            <person name="Faulkner G."/>
            <person name="Fletcher C.F."/>
            <person name="Fukushima T."/>
            <person name="Furuno M."/>
            <person name="Futaki S."/>
            <person name="Gariboldi M."/>
            <person name="Georgii-Hemming P."/>
            <person name="Gingeras T.R."/>
            <person name="Gojobori T."/>
            <person name="Green R.E."/>
            <person name="Gustincich S."/>
            <person name="Harbers M."/>
            <person name="Hayashi Y."/>
            <person name="Hensch T.K."/>
            <person name="Hirokawa N."/>
            <person name="Hill D."/>
            <person name="Huminiecki L."/>
            <person name="Iacono M."/>
            <person name="Ikeo K."/>
            <person name="Iwama A."/>
            <person name="Ishikawa T."/>
            <person name="Jakt M."/>
            <person name="Kanapin A."/>
            <person name="Katoh M."/>
            <person name="Kawasawa Y."/>
            <person name="Kelso J."/>
            <person name="Kitamura H."/>
            <person name="Kitano H."/>
            <person name="Kollias G."/>
            <person name="Krishnan S.P."/>
            <person name="Kruger A."/>
            <person name="Kummerfeld S.K."/>
            <person name="Kurochkin I.V."/>
            <person name="Lareau L.F."/>
            <person name="Lazarevic D."/>
            <person name="Lipovich L."/>
            <person name="Liu J."/>
            <person name="Liuni S."/>
            <person name="McWilliam S."/>
            <person name="Madan Babu M."/>
            <person name="Madera M."/>
            <person name="Marchionni L."/>
            <person name="Matsuda H."/>
            <person name="Matsuzawa S."/>
            <person name="Miki H."/>
            <person name="Mignone F."/>
            <person name="Miyake S."/>
            <person name="Morris K."/>
            <person name="Mottagui-Tabar S."/>
            <person name="Mulder N."/>
            <person name="Nakano N."/>
            <person name="Nakauchi H."/>
            <person name="Ng P."/>
            <person name="Nilsson R."/>
            <person name="Nishiguchi S."/>
            <person name="Nishikawa S."/>
            <person name="Nori F."/>
            <person name="Ohara O."/>
            <person name="Okazaki Y."/>
            <person name="Orlando V."/>
            <person name="Pang K.C."/>
            <person name="Pavan W.J."/>
            <person name="Pavesi G."/>
            <person name="Pesole G."/>
            <person name="Petrovsky N."/>
            <person name="Piazza S."/>
            <person name="Reed J."/>
            <person name="Reid J.F."/>
            <person name="Ring B.Z."/>
            <person name="Ringwald M."/>
            <person name="Rost B."/>
            <person name="Ruan Y."/>
            <person name="Salzberg S.L."/>
            <person name="Sandelin A."/>
            <person name="Schneider C."/>
            <person name="Schoenbach C."/>
            <person name="Sekiguchi K."/>
            <person name="Semple C.A."/>
            <person name="Seno S."/>
            <person name="Sessa L."/>
            <person name="Sheng Y."/>
            <person name="Shibata Y."/>
            <person name="Shimada H."/>
            <person name="Shimada K."/>
            <person name="Silva D."/>
            <person name="Sinclair B."/>
            <person name="Sperling S."/>
            <person name="Stupka E."/>
            <person name="Sugiura K."/>
            <person name="Sultana R."/>
            <person name="Takenaka Y."/>
            <person name="Taki K."/>
            <person name="Tammoja K."/>
            <person name="Tan S.L."/>
            <person name="Tang S."/>
            <person name="Taylor M.S."/>
            <person name="Tegner J."/>
            <person name="Teichmann S.A."/>
            <person name="Ueda H.R."/>
            <person name="van Nimwegen E."/>
            <person name="Verardo R."/>
            <person name="Wei C.L."/>
            <person name="Yagi K."/>
            <person name="Yamanishi H."/>
            <person name="Zabarovsky E."/>
            <person name="Zhu S."/>
            <person name="Zimmer A."/>
            <person name="Hide W."/>
            <person name="Bult C."/>
            <person name="Grimmond S.M."/>
            <person name="Teasdale R.D."/>
            <person name="Liu E.T."/>
            <person name="Brusic V."/>
            <person name="Quackenbush J."/>
            <person name="Wahlestedt C."/>
            <person name="Mattick J.S."/>
            <person name="Hume D.A."/>
            <person name="Kai C."/>
            <person name="Sasaki D."/>
            <person name="Tomaru Y."/>
            <person name="Fukuda S."/>
            <person name="Kanamori-Katayama M."/>
            <person name="Suzuki M."/>
            <person name="Aoki J."/>
            <person name="Arakawa T."/>
            <person name="Iida J."/>
            <person name="Imamura K."/>
            <person name="Itoh M."/>
            <person name="Kato T."/>
            <person name="Kawaji H."/>
            <person name="Kawagashira N."/>
            <person name="Kawashima T."/>
            <person name="Kojima M."/>
            <person name="Kondo S."/>
            <person name="Konno H."/>
            <person name="Nakano K."/>
            <person name="Ninomiya N."/>
            <person name="Nishio T."/>
            <person name="Okada M."/>
            <person name="Plessy C."/>
            <person name="Shibata K."/>
            <person name="Shiraki T."/>
            <person name="Suzuki S."/>
            <person name="Tagami M."/>
            <person name="Waki K."/>
            <person name="Watahiki A."/>
            <person name="Okamura-Oho Y."/>
            <person name="Suzuki H."/>
            <person name="Kawai J."/>
            <person name="Hayashizaki Y."/>
        </authorList>
    </citation>
    <scope>NUCLEOTIDE SEQUENCE [LARGE SCALE MRNA] (ISOFORM 2)</scope>
    <source>
        <strain>C57BL/6J</strain>
        <tissue>Testis</tissue>
    </source>
</reference>
<reference key="2">
    <citation type="journal article" date="2004" name="Genome Res.">
        <title>The status, quality, and expansion of the NIH full-length cDNA project: the Mammalian Gene Collection (MGC).</title>
        <authorList>
            <consortium name="The MGC Project Team"/>
        </authorList>
    </citation>
    <scope>NUCLEOTIDE SEQUENCE [LARGE SCALE MRNA] (ISOFORM 1)</scope>
    <source>
        <strain>129</strain>
        <strain>FVB/N</strain>
        <tissue>Mammary tumor</tissue>
    </source>
</reference>
<proteinExistence type="evidence at transcript level"/>
<protein>
    <recommendedName>
        <fullName>HHIP-like protein 2</fullName>
    </recommendedName>
</protein>
<evidence type="ECO:0000250" key="1"/>
<evidence type="ECO:0000255" key="2"/>
<evidence type="ECO:0000256" key="3">
    <source>
        <dbReference type="SAM" id="MobiDB-lite"/>
    </source>
</evidence>
<evidence type="ECO:0000303" key="4">
    <source>
    </source>
</evidence>
<evidence type="ECO:0000305" key="5"/>
<name>HIPL2_MOUSE</name>
<keyword id="KW-0025">Alternative splicing</keyword>
<keyword id="KW-1015">Disulfide bond</keyword>
<keyword id="KW-0325">Glycoprotein</keyword>
<keyword id="KW-1185">Reference proteome</keyword>
<keyword id="KW-0964">Secreted</keyword>
<keyword id="KW-0732">Signal</keyword>
<accession>Q9D2G9</accession>